<comment type="function">
    <text>Visual pigments are the light-absorbing molecules that mediate vision. They consist of an apoprotein, opsin, covalently linked to cis-retinal.</text>
</comment>
<comment type="subcellular location">
    <subcellularLocation>
        <location evidence="2">Cell projection</location>
        <location evidence="2">Rhabdomere membrane</location>
        <topology evidence="6">Multi-pass membrane protein</topology>
    </subcellularLocation>
</comment>
<comment type="PTM">
    <text evidence="1">Phosphorylated on some or all of the serine and threonine residues present in the C-terminal region.</text>
</comment>
<comment type="similarity">
    <text evidence="4">Belongs to the G-protein coupled receptor 1 family. Opsin subfamily.</text>
</comment>
<keyword id="KW-1003">Cell membrane</keyword>
<keyword id="KW-0966">Cell projection</keyword>
<keyword id="KW-0157">Chromophore</keyword>
<keyword id="KW-1015">Disulfide bond</keyword>
<keyword id="KW-0297">G-protein coupled receptor</keyword>
<keyword id="KW-0325">Glycoprotein</keyword>
<keyword id="KW-0472">Membrane</keyword>
<keyword id="KW-0597">Phosphoprotein</keyword>
<keyword id="KW-0600">Photoreceptor protein</keyword>
<keyword id="KW-0675">Receptor</keyword>
<keyword id="KW-0681">Retinal protein</keyword>
<keyword id="KW-0716">Sensory transduction</keyword>
<keyword id="KW-0807">Transducer</keyword>
<keyword id="KW-0812">Transmembrane</keyword>
<keyword id="KW-1133">Transmembrane helix</keyword>
<keyword id="KW-0844">Vision</keyword>
<sequence length="381" mass="42399">MASASLISEPSFSAYWGGSGGFANQTVVDKVPPEMLYLVDPHWYQFPPMNPLWHGLLGFVIGVLGVISVIGNGMVIYIFSTTKSLRTPSNLLVVNLAFSDFLMMFTMSAPMGINCYYETWVLGPFMCELYALFGSLFGCGSIWTMTMIALDRYNVIVKGLSAKPMTNKTAMLRILFIWAFSVAWTIMPLFGWNRYVPEGNMTACGTDYLTKDWVSRSYILVYSFFVYLLPLGTIIYSYFFILQAVSAHEKQMREQRKKMNVASLRSAEASQTSAECKLAKVALMTISLWFFGWTPYLIINFTGIFETMKISPLLTIWGSLFAKANAVFNPIVYGISHPKYRAALEKKFPSLACASSSDDNTSVASGATTVSDEKSEKSASA</sequence>
<proteinExistence type="evidence at transcript level"/>
<feature type="chain" id="PRO_0000197635" description="Opsin-1">
    <location>
        <begin position="1"/>
        <end position="381"/>
    </location>
</feature>
<feature type="topological domain" description="Extracellular" evidence="3">
    <location>
        <begin position="1"/>
        <end position="53"/>
    </location>
</feature>
<feature type="transmembrane region" description="Helical; Name=1" evidence="3">
    <location>
        <begin position="54"/>
        <end position="78"/>
    </location>
</feature>
<feature type="topological domain" description="Cytoplasmic" evidence="3">
    <location>
        <begin position="79"/>
        <end position="90"/>
    </location>
</feature>
<feature type="transmembrane region" description="Helical; Name=2" evidence="3">
    <location>
        <begin position="91"/>
        <end position="115"/>
    </location>
</feature>
<feature type="topological domain" description="Extracellular" evidence="3">
    <location>
        <begin position="116"/>
        <end position="130"/>
    </location>
</feature>
<feature type="transmembrane region" description="Helical; Name=3" evidence="3">
    <location>
        <begin position="131"/>
        <end position="150"/>
    </location>
</feature>
<feature type="topological domain" description="Cytoplasmic" evidence="3">
    <location>
        <begin position="151"/>
        <end position="169"/>
    </location>
</feature>
<feature type="transmembrane region" description="Helical; Name=4" evidence="3">
    <location>
        <begin position="170"/>
        <end position="193"/>
    </location>
</feature>
<feature type="topological domain" description="Extracellular" evidence="3">
    <location>
        <begin position="194"/>
        <end position="217"/>
    </location>
</feature>
<feature type="transmembrane region" description="Helical; Name=5" evidence="3">
    <location>
        <begin position="218"/>
        <end position="245"/>
    </location>
</feature>
<feature type="topological domain" description="Cytoplasmic" evidence="3">
    <location>
        <begin position="246"/>
        <end position="280"/>
    </location>
</feature>
<feature type="transmembrane region" description="Helical; Name=6" evidence="3">
    <location>
        <begin position="281"/>
        <end position="304"/>
    </location>
</feature>
<feature type="topological domain" description="Extracellular" evidence="3">
    <location>
        <begin position="305"/>
        <end position="311"/>
    </location>
</feature>
<feature type="transmembrane region" description="Helical; Name=7" evidence="3">
    <location>
        <begin position="312"/>
        <end position="336"/>
    </location>
</feature>
<feature type="topological domain" description="Cytoplasmic" evidence="3">
    <location>
        <begin position="337"/>
        <end position="381"/>
    </location>
</feature>
<feature type="region of interest" description="Disordered" evidence="5">
    <location>
        <begin position="354"/>
        <end position="381"/>
    </location>
</feature>
<feature type="compositionally biased region" description="Polar residues" evidence="5">
    <location>
        <begin position="354"/>
        <end position="370"/>
    </location>
</feature>
<feature type="compositionally biased region" description="Basic and acidic residues" evidence="5">
    <location>
        <begin position="371"/>
        <end position="381"/>
    </location>
</feature>
<feature type="modified residue" description="N6-(retinylidene)lysine" evidence="1">
    <location>
        <position position="323"/>
    </location>
</feature>
<feature type="glycosylation site" description="N-linked (GlcNAc...) asparagine" evidence="3">
    <location>
        <position position="24"/>
    </location>
</feature>
<feature type="glycosylation site" description="N-linked (GlcNAc...) asparagine" evidence="3">
    <location>
        <position position="200"/>
    </location>
</feature>
<feature type="disulfide bond" evidence="4">
    <location>
        <begin position="127"/>
        <end position="204"/>
    </location>
</feature>
<name>OPS1_SCHGR</name>
<protein>
    <recommendedName>
        <fullName>Opsin-1</fullName>
    </recommendedName>
</protein>
<evidence type="ECO:0000250" key="1"/>
<evidence type="ECO:0000250" key="2">
    <source>
        <dbReference type="UniProtKB" id="P06002"/>
    </source>
</evidence>
<evidence type="ECO:0000255" key="3"/>
<evidence type="ECO:0000255" key="4">
    <source>
        <dbReference type="PROSITE-ProRule" id="PRU00521"/>
    </source>
</evidence>
<evidence type="ECO:0000256" key="5">
    <source>
        <dbReference type="SAM" id="MobiDB-lite"/>
    </source>
</evidence>
<evidence type="ECO:0000305" key="6"/>
<gene>
    <name type="primary">Lo1</name>
</gene>
<accession>Q94741</accession>
<organism>
    <name type="scientific">Schistocerca gregaria</name>
    <name type="common">Desert locust</name>
    <name type="synonym">Gryllus gregarius</name>
    <dbReference type="NCBI Taxonomy" id="7010"/>
    <lineage>
        <taxon>Eukaryota</taxon>
        <taxon>Metazoa</taxon>
        <taxon>Ecdysozoa</taxon>
        <taxon>Arthropoda</taxon>
        <taxon>Hexapoda</taxon>
        <taxon>Insecta</taxon>
        <taxon>Pterygota</taxon>
        <taxon>Neoptera</taxon>
        <taxon>Polyneoptera</taxon>
        <taxon>Orthoptera</taxon>
        <taxon>Caelifera</taxon>
        <taxon>Acrididea</taxon>
        <taxon>Acridomorpha</taxon>
        <taxon>Acridoidea</taxon>
        <taxon>Acrididae</taxon>
        <taxon>Cyrtacanthacridinae</taxon>
        <taxon>Schistocerca</taxon>
    </lineage>
</organism>
<reference key="1">
    <citation type="journal article" date="1997" name="Vision Res.">
        <title>Primary structure of locust opsins: a speculative model which may account for ultraviolet wavelength light detection.</title>
        <authorList>
            <person name="Towner P."/>
            <person name="Harris P."/>
            <person name="Wolstenholme A.J."/>
            <person name="Hill C."/>
            <person name="Worm K."/>
            <person name="Gartner W."/>
        </authorList>
    </citation>
    <scope>NUCLEOTIDE SEQUENCE [MRNA]</scope>
</reference>
<dbReference type="EMBL" id="X80071">
    <property type="protein sequence ID" value="CAA56377.1"/>
    <property type="molecule type" value="mRNA"/>
</dbReference>
<dbReference type="SMR" id="Q94741"/>
<dbReference type="GlyCosmos" id="Q94741">
    <property type="glycosylation" value="2 sites, No reported glycans"/>
</dbReference>
<dbReference type="OrthoDB" id="9996086at2759"/>
<dbReference type="GO" id="GO:0033583">
    <property type="term" value="C:rhabdomere membrane"/>
    <property type="evidence" value="ECO:0007669"/>
    <property type="project" value="UniProtKB-SubCell"/>
</dbReference>
<dbReference type="GO" id="GO:0004930">
    <property type="term" value="F:G protein-coupled receptor activity"/>
    <property type="evidence" value="ECO:0007669"/>
    <property type="project" value="UniProtKB-KW"/>
</dbReference>
<dbReference type="GO" id="GO:0009881">
    <property type="term" value="F:photoreceptor activity"/>
    <property type="evidence" value="ECO:0007669"/>
    <property type="project" value="UniProtKB-KW"/>
</dbReference>
<dbReference type="GO" id="GO:0007602">
    <property type="term" value="P:phototransduction"/>
    <property type="evidence" value="ECO:0007669"/>
    <property type="project" value="UniProtKB-KW"/>
</dbReference>
<dbReference type="GO" id="GO:0007601">
    <property type="term" value="P:visual perception"/>
    <property type="evidence" value="ECO:0007669"/>
    <property type="project" value="UniProtKB-KW"/>
</dbReference>
<dbReference type="CDD" id="cd15079">
    <property type="entry name" value="7tmA_photoreceptors_insect"/>
    <property type="match status" value="1"/>
</dbReference>
<dbReference type="FunFam" id="1.20.1070.10:FF:000044">
    <property type="entry name" value="Opsin, ultraviolet-sensitive"/>
    <property type="match status" value="1"/>
</dbReference>
<dbReference type="Gene3D" id="1.20.1070.10">
    <property type="entry name" value="Rhodopsin 7-helix transmembrane proteins"/>
    <property type="match status" value="1"/>
</dbReference>
<dbReference type="InterPro" id="IPR050125">
    <property type="entry name" value="GPCR_opsins"/>
</dbReference>
<dbReference type="InterPro" id="IPR000276">
    <property type="entry name" value="GPCR_Rhodpsn"/>
</dbReference>
<dbReference type="InterPro" id="IPR017452">
    <property type="entry name" value="GPCR_Rhodpsn_7TM"/>
</dbReference>
<dbReference type="InterPro" id="IPR001760">
    <property type="entry name" value="Opsin"/>
</dbReference>
<dbReference type="InterPro" id="IPR001391">
    <property type="entry name" value="Opsin_lateye"/>
</dbReference>
<dbReference type="InterPro" id="IPR027430">
    <property type="entry name" value="Retinal_BS"/>
</dbReference>
<dbReference type="PANTHER" id="PTHR24240">
    <property type="entry name" value="OPSIN"/>
    <property type="match status" value="1"/>
</dbReference>
<dbReference type="Pfam" id="PF00001">
    <property type="entry name" value="7tm_1"/>
    <property type="match status" value="1"/>
</dbReference>
<dbReference type="PRINTS" id="PR00237">
    <property type="entry name" value="GPCRRHODOPSN"/>
</dbReference>
<dbReference type="PRINTS" id="PR00238">
    <property type="entry name" value="OPSIN"/>
</dbReference>
<dbReference type="PRINTS" id="PR00578">
    <property type="entry name" value="OPSINLTRLEYE"/>
</dbReference>
<dbReference type="SMART" id="SM01381">
    <property type="entry name" value="7TM_GPCR_Srsx"/>
    <property type="match status" value="1"/>
</dbReference>
<dbReference type="SUPFAM" id="SSF81321">
    <property type="entry name" value="Family A G protein-coupled receptor-like"/>
    <property type="match status" value="1"/>
</dbReference>
<dbReference type="PROSITE" id="PS00237">
    <property type="entry name" value="G_PROTEIN_RECEP_F1_1"/>
    <property type="match status" value="1"/>
</dbReference>
<dbReference type="PROSITE" id="PS50262">
    <property type="entry name" value="G_PROTEIN_RECEP_F1_2"/>
    <property type="match status" value="1"/>
</dbReference>
<dbReference type="PROSITE" id="PS00238">
    <property type="entry name" value="OPSIN"/>
    <property type="match status" value="1"/>
</dbReference>